<protein>
    <recommendedName>
        <fullName>Uncharacterized gene 72 protein</fullName>
    </recommendedName>
</protein>
<proteinExistence type="predicted"/>
<name>VG72_GAHVM</name>
<feature type="chain" id="PRO_0000406557" description="Uncharacterized gene 72 protein">
    <location>
        <begin position="1"/>
        <end position="903"/>
    </location>
</feature>
<dbReference type="EMBL" id="AF243438">
    <property type="protein sequence ID" value="AAG14252.1"/>
    <property type="molecule type" value="Genomic_DNA"/>
</dbReference>
<dbReference type="RefSeq" id="YP_001033988.1">
    <property type="nucleotide sequence ID" value="NC_002229.3"/>
</dbReference>
<dbReference type="GeneID" id="4811533"/>
<dbReference type="KEGG" id="vg:4811533"/>
<dbReference type="Proteomes" id="UP000008072">
    <property type="component" value="Segment"/>
</dbReference>
<sequence length="903" mass="103406">MSCFASSIRRKKVDCNRHPNQDNDPERTVFSSGAVLFLDQLKRLPSNPRYVMSIGSVPAERSTIALFAHFDDVPDPHTLICSMYEWMQVSGPIQNLNPPKPSAEWFPEFQCTSTRSTIIQALYNINCGPPWSLLGRIRTEVTVLRCVQVTDAAGMPGLIRFERRTHFGRNLEAVTVTPLPESTNPSTDLAYLRSLYKSKLYTIILLEWDHKTFHGNDYDELRNSIAWLNIRLGSTRWSHVVNFVRNTTDADFALYGDYLTTFWELDVDTNTCTQMGMGAVYAGAFENIDVMLAEMLMYDSAATVDKPHSSNTRTSEISKIDFLIEDPPPPKHSDILQPVEDKYGWIRASENLEPRDPNTYITSVSPECMLYPSKDIAPCYRYTRDTVSRLYHKMELDGSAATHNNQGNYFPNGCDCDADESYVKELSEVYLDDLKWVVEECCRRANDMLISEKLKPWKETLNLHISGDSTTITSKVRQRKKVPPIMYFTGTWDDWLHRSHSTYTAEHNIQYRSSRRIRLDLFTERPVARSTMPPLHVSRCGAVALIKPFLRRLCNPPANRDCERVLLSMKQKLEDLDIDNTEVYPPQDLCFKVFIGTSITPIVRKFFSADWSRAGKCGRSNFRKELESTVRRISVPLEKSKPELAFIFSLSVVTSNVENGARTCTETLFSFGGAAIDMTTLIDGINKLLVLCDLLAVSGIRRLSTIESIPDIGTSPYRCILQRTTHITACMTPKVVRCENYNVLQSHWEECIVRSSEYLTYIPSQIEFVTHLTTRCPLKPENNDWYLGLFFPFKGFRVITAETKRWLAEYTRRFHKWFQWGEGSPHYAALRHLIPLCDCYLTDACMTNNFFGCGILFHMHCVPTPERESRIVAILTRALTEAQKYAESSLHVDIDTQNISIYN</sequence>
<keyword id="KW-1185">Reference proteome</keyword>
<reference key="1">
    <citation type="journal article" date="2000" name="J. Virol.">
        <title>The genome of a very virulent Marek's disease virus.</title>
        <authorList>
            <person name="Tulman E.R."/>
            <person name="Afonso C.L."/>
            <person name="Lu Z."/>
            <person name="Zsak L."/>
            <person name="Rock D.L."/>
            <person name="Kutish G.F."/>
        </authorList>
    </citation>
    <scope>NUCLEOTIDE SEQUENCE [LARGE SCALE GENOMIC DNA]</scope>
</reference>
<organism>
    <name type="scientific">Gallid herpesvirus 2 (strain Chicken/Md5/ATCC VR-987)</name>
    <name type="common">GaHV-2</name>
    <name type="synonym">Marek's disease herpesvirus type 1</name>
    <dbReference type="NCBI Taxonomy" id="10389"/>
    <lineage>
        <taxon>Viruses</taxon>
        <taxon>Duplodnaviria</taxon>
        <taxon>Heunggongvirae</taxon>
        <taxon>Peploviricota</taxon>
        <taxon>Herviviricetes</taxon>
        <taxon>Herpesvirales</taxon>
        <taxon>Orthoherpesviridae</taxon>
        <taxon>Alphaherpesvirinae</taxon>
        <taxon>Mardivirus</taxon>
        <taxon>Mardivirus gallidalpha2</taxon>
        <taxon>Gallid alphaherpesvirus 2</taxon>
    </lineage>
</organism>
<accession>Q9E6M1</accession>
<organismHost>
    <name type="scientific">Gallus gallus</name>
    <name type="common">Chicken</name>
    <dbReference type="NCBI Taxonomy" id="9031"/>
</organismHost>
<gene>
    <name type="primary">MDV072</name>
</gene>